<protein>
    <recommendedName>
        <fullName evidence="1">Chaperonin GroEL</fullName>
        <ecNumber evidence="1">5.6.1.7</ecNumber>
    </recommendedName>
    <alternativeName>
        <fullName evidence="1">60 kDa chaperonin</fullName>
    </alternativeName>
    <alternativeName>
        <fullName evidence="1">Chaperonin-60</fullName>
        <shortName evidence="1">Cpn60</shortName>
    </alternativeName>
</protein>
<accession>P69050</accession>
<accession>P26878</accession>
<feature type="chain" id="PRO_0000063407" description="Chaperonin GroEL">
    <location>
        <begin position="1"/>
        <end position="548"/>
    </location>
</feature>
<feature type="binding site" evidence="1">
    <location>
        <begin position="29"/>
        <end position="32"/>
    </location>
    <ligand>
        <name>ATP</name>
        <dbReference type="ChEBI" id="CHEBI:30616"/>
    </ligand>
</feature>
<feature type="binding site" evidence="1">
    <location>
        <position position="50"/>
    </location>
    <ligand>
        <name>ATP</name>
        <dbReference type="ChEBI" id="CHEBI:30616"/>
    </ligand>
</feature>
<feature type="binding site" evidence="1">
    <location>
        <begin position="86"/>
        <end position="90"/>
    </location>
    <ligand>
        <name>ATP</name>
        <dbReference type="ChEBI" id="CHEBI:30616"/>
    </ligand>
</feature>
<feature type="binding site" evidence="1">
    <location>
        <position position="414"/>
    </location>
    <ligand>
        <name>ATP</name>
        <dbReference type="ChEBI" id="CHEBI:30616"/>
    </ligand>
</feature>
<feature type="binding site" evidence="1">
    <location>
        <begin position="478"/>
        <end position="480"/>
    </location>
    <ligand>
        <name>ATP</name>
        <dbReference type="ChEBI" id="CHEBI:30616"/>
    </ligand>
</feature>
<feature type="binding site" evidence="1">
    <location>
        <position position="494"/>
    </location>
    <ligand>
        <name>ATP</name>
        <dbReference type="ChEBI" id="CHEBI:30616"/>
    </ligand>
</feature>
<keyword id="KW-0067">ATP-binding</keyword>
<keyword id="KW-0143">Chaperone</keyword>
<keyword id="KW-0963">Cytoplasm</keyword>
<keyword id="KW-0413">Isomerase</keyword>
<keyword id="KW-0547">Nucleotide-binding</keyword>
<keyword id="KW-0346">Stress response</keyword>
<name>CH60_LEGPN</name>
<gene>
    <name evidence="1" type="primary">groEL</name>
    <name evidence="1" type="synonym">groL</name>
    <name type="synonym">htpB</name>
    <name type="synonym">mopA</name>
</gene>
<reference key="1">
    <citation type="journal article" date="1990" name="Infect. Immun.">
        <title>Legionella pneumophila htpAB heat shock operon: nucleotide sequence and expression of the 60-kilodalton antigen in L. pneumophila-infected HeLa cells.</title>
        <authorList>
            <person name="Hoffman P.S."/>
            <person name="Houston L."/>
            <person name="Butler C.A."/>
        </authorList>
    </citation>
    <scope>NUCLEOTIDE SEQUENCE [GENOMIC DNA]</scope>
    <source>
        <strain>SVir</strain>
    </source>
</reference>
<proteinExistence type="inferred from homology"/>
<comment type="function">
    <text evidence="1">Together with its co-chaperonin GroES, plays an essential role in assisting protein folding. The GroEL-GroES system forms a nano-cage that allows encapsulation of the non-native substrate proteins and provides a physical environment optimized to promote and accelerate protein folding.</text>
</comment>
<comment type="function">
    <text>May play a protective role against the defense mechanisms generated by the infected macrophages.</text>
</comment>
<comment type="catalytic activity">
    <reaction evidence="1">
        <text>ATP + H2O + a folded polypeptide = ADP + phosphate + an unfolded polypeptide.</text>
        <dbReference type="EC" id="5.6.1.7"/>
    </reaction>
</comment>
<comment type="subunit">
    <text evidence="1">Forms a cylinder of 14 subunits composed of two heptameric rings stacked back-to-back. Interacts with the co-chaperonin GroES.</text>
</comment>
<comment type="subcellular location">
    <subcellularLocation>
        <location evidence="1">Cytoplasm</location>
    </subcellularLocation>
</comment>
<comment type="similarity">
    <text evidence="1">Belongs to the chaperonin (HSP60) family.</text>
</comment>
<organism>
    <name type="scientific">Legionella pneumophila</name>
    <dbReference type="NCBI Taxonomy" id="446"/>
    <lineage>
        <taxon>Bacteria</taxon>
        <taxon>Pseudomonadati</taxon>
        <taxon>Pseudomonadota</taxon>
        <taxon>Gammaproteobacteria</taxon>
        <taxon>Legionellales</taxon>
        <taxon>Legionellaceae</taxon>
        <taxon>Legionella</taxon>
    </lineage>
</organism>
<evidence type="ECO:0000255" key="1">
    <source>
        <dbReference type="HAMAP-Rule" id="MF_00600"/>
    </source>
</evidence>
<dbReference type="EC" id="5.6.1.7" evidence="1"/>
<dbReference type="EMBL" id="M31918">
    <property type="protein sequence ID" value="AAA25299.1"/>
    <property type="molecule type" value="Genomic_DNA"/>
</dbReference>
<dbReference type="PIR" id="A41468">
    <property type="entry name" value="A41468"/>
</dbReference>
<dbReference type="SMR" id="P69050"/>
<dbReference type="STRING" id="91892.BIZ52_03755"/>
<dbReference type="eggNOG" id="COG0459">
    <property type="taxonomic scope" value="Bacteria"/>
</dbReference>
<dbReference type="GO" id="GO:0005737">
    <property type="term" value="C:cytoplasm"/>
    <property type="evidence" value="ECO:0007669"/>
    <property type="project" value="UniProtKB-SubCell"/>
</dbReference>
<dbReference type="GO" id="GO:0005524">
    <property type="term" value="F:ATP binding"/>
    <property type="evidence" value="ECO:0007669"/>
    <property type="project" value="UniProtKB-UniRule"/>
</dbReference>
<dbReference type="GO" id="GO:0140662">
    <property type="term" value="F:ATP-dependent protein folding chaperone"/>
    <property type="evidence" value="ECO:0007669"/>
    <property type="project" value="InterPro"/>
</dbReference>
<dbReference type="GO" id="GO:0016853">
    <property type="term" value="F:isomerase activity"/>
    <property type="evidence" value="ECO:0007669"/>
    <property type="project" value="UniProtKB-KW"/>
</dbReference>
<dbReference type="GO" id="GO:0051082">
    <property type="term" value="F:unfolded protein binding"/>
    <property type="evidence" value="ECO:0007669"/>
    <property type="project" value="UniProtKB-UniRule"/>
</dbReference>
<dbReference type="GO" id="GO:0042026">
    <property type="term" value="P:protein refolding"/>
    <property type="evidence" value="ECO:0007669"/>
    <property type="project" value="UniProtKB-UniRule"/>
</dbReference>
<dbReference type="CDD" id="cd03344">
    <property type="entry name" value="GroEL"/>
    <property type="match status" value="1"/>
</dbReference>
<dbReference type="FunFam" id="1.10.560.10:FF:000001">
    <property type="entry name" value="60 kDa chaperonin"/>
    <property type="match status" value="1"/>
</dbReference>
<dbReference type="FunFam" id="3.50.7.10:FF:000001">
    <property type="entry name" value="60 kDa chaperonin"/>
    <property type="match status" value="1"/>
</dbReference>
<dbReference type="Gene3D" id="3.50.7.10">
    <property type="entry name" value="GroEL"/>
    <property type="match status" value="1"/>
</dbReference>
<dbReference type="Gene3D" id="1.10.560.10">
    <property type="entry name" value="GroEL-like equatorial domain"/>
    <property type="match status" value="1"/>
</dbReference>
<dbReference type="Gene3D" id="3.30.260.10">
    <property type="entry name" value="TCP-1-like chaperonin intermediate domain"/>
    <property type="match status" value="1"/>
</dbReference>
<dbReference type="HAMAP" id="MF_00600">
    <property type="entry name" value="CH60"/>
    <property type="match status" value="1"/>
</dbReference>
<dbReference type="InterPro" id="IPR018370">
    <property type="entry name" value="Chaperonin_Cpn60_CS"/>
</dbReference>
<dbReference type="InterPro" id="IPR001844">
    <property type="entry name" value="Cpn60/GroEL"/>
</dbReference>
<dbReference type="InterPro" id="IPR002423">
    <property type="entry name" value="Cpn60/GroEL/TCP-1"/>
</dbReference>
<dbReference type="InterPro" id="IPR027409">
    <property type="entry name" value="GroEL-like_apical_dom_sf"/>
</dbReference>
<dbReference type="InterPro" id="IPR027413">
    <property type="entry name" value="GROEL-like_equatorial_sf"/>
</dbReference>
<dbReference type="InterPro" id="IPR027410">
    <property type="entry name" value="TCP-1-like_intermed_sf"/>
</dbReference>
<dbReference type="NCBIfam" id="TIGR02348">
    <property type="entry name" value="GroEL"/>
    <property type="match status" value="1"/>
</dbReference>
<dbReference type="NCBIfam" id="NF000592">
    <property type="entry name" value="PRK00013.1"/>
    <property type="match status" value="1"/>
</dbReference>
<dbReference type="NCBIfam" id="NF009487">
    <property type="entry name" value="PRK12849.1"/>
    <property type="match status" value="1"/>
</dbReference>
<dbReference type="NCBIfam" id="NF009488">
    <property type="entry name" value="PRK12850.1"/>
    <property type="match status" value="1"/>
</dbReference>
<dbReference type="NCBIfam" id="NF009489">
    <property type="entry name" value="PRK12851.1"/>
    <property type="match status" value="1"/>
</dbReference>
<dbReference type="PANTHER" id="PTHR45633">
    <property type="entry name" value="60 KDA HEAT SHOCK PROTEIN, MITOCHONDRIAL"/>
    <property type="match status" value="1"/>
</dbReference>
<dbReference type="Pfam" id="PF00118">
    <property type="entry name" value="Cpn60_TCP1"/>
    <property type="match status" value="1"/>
</dbReference>
<dbReference type="PRINTS" id="PR00298">
    <property type="entry name" value="CHAPERONIN60"/>
</dbReference>
<dbReference type="SUPFAM" id="SSF52029">
    <property type="entry name" value="GroEL apical domain-like"/>
    <property type="match status" value="1"/>
</dbReference>
<dbReference type="SUPFAM" id="SSF48592">
    <property type="entry name" value="GroEL equatorial domain-like"/>
    <property type="match status" value="1"/>
</dbReference>
<dbReference type="SUPFAM" id="SSF54849">
    <property type="entry name" value="GroEL-intermediate domain like"/>
    <property type="match status" value="1"/>
</dbReference>
<dbReference type="PROSITE" id="PS00296">
    <property type="entry name" value="CHAPERONINS_CPN60"/>
    <property type="match status" value="1"/>
</dbReference>
<sequence length="548" mass="58211">MAKELRFGDDARLQMLAGVNALADAVQVTMGPRGRNVVLEKSYGAPTVTKDGVSVAKEIEFEHRFMNMGAQMVKEVASKTSDTAGDGTTTATVLARSILVEGHKAVAAGMNPMDLKRGIDKAVLAVTKKLQAMSKPCKDSKAIAQVGTISANSDEAIGAIIAEAMEKVGKEGVITVEDGNGLENELYVVEGMQFDRGYISPYFINNQQNMSCELEHPFILLVDKKVSSIREMLSVLEGVAKSGRPLLIIAEDVEGEALATLVVNNMRGIVKVCAVKAPGFGDRRKAMLQDIAILTKGQVISEEIGKSLEGATLEDLGSAKRIVVTKENTTIIDGEGKATEINARIAQIRAQMEETTSDYDREKLQERVAKLAGGVAVIKVGAATEVEMKEKKARVEDALHATRAAVEEGIVAGGGVALIRAQKALDSLKGDNDDQNMGINILRRAIESPMRQIVTNAGYEASVVVNKVAEHKDNYGFNAATGEYGDMVEMGILDPTKVTRMALQNAASVASLMLTTECMVADLPKKEEGVGAGDMGGMGGMGGMGGMM</sequence>